<dbReference type="EC" id="5.4.2.7" evidence="5"/>
<dbReference type="EMBL" id="Z49704">
    <property type="protein sequence ID" value="CAA89776.1"/>
    <property type="molecule type" value="Genomic_DNA"/>
</dbReference>
<dbReference type="EMBL" id="BK006946">
    <property type="protein sequence ID" value="DAA10179.1"/>
    <property type="molecule type" value="Genomic_DNA"/>
</dbReference>
<dbReference type="PIR" id="S54585">
    <property type="entry name" value="S54585"/>
</dbReference>
<dbReference type="RefSeq" id="NP_014005.1">
    <property type="nucleotide sequence ID" value="NM_001182785.1"/>
</dbReference>
<dbReference type="SMR" id="Q03262"/>
<dbReference type="BioGRID" id="35457">
    <property type="interactions" value="55"/>
</dbReference>
<dbReference type="DIP" id="DIP-5066N"/>
<dbReference type="FunCoup" id="Q03262">
    <property type="interactions" value="433"/>
</dbReference>
<dbReference type="STRING" id="4932.YMR278W"/>
<dbReference type="GlyGen" id="Q03262">
    <property type="glycosylation" value="1 site"/>
</dbReference>
<dbReference type="iPTMnet" id="Q03262"/>
<dbReference type="PaxDb" id="4932-YMR278W"/>
<dbReference type="PeptideAtlas" id="Q03262"/>
<dbReference type="EnsemblFungi" id="YMR278W_mRNA">
    <property type="protein sequence ID" value="YMR278W"/>
    <property type="gene ID" value="YMR278W"/>
</dbReference>
<dbReference type="GeneID" id="855321"/>
<dbReference type="KEGG" id="sce:YMR278W"/>
<dbReference type="AGR" id="SGD:S000004891"/>
<dbReference type="SGD" id="S000004891">
    <property type="gene designation" value="PRM15"/>
</dbReference>
<dbReference type="VEuPathDB" id="FungiDB:YMR278W"/>
<dbReference type="eggNOG" id="KOG1220">
    <property type="taxonomic scope" value="Eukaryota"/>
</dbReference>
<dbReference type="GeneTree" id="ENSGT00940000168144"/>
<dbReference type="HOGENOM" id="CLU_016950_0_1_1"/>
<dbReference type="InParanoid" id="Q03262"/>
<dbReference type="OMA" id="GYCVDPE"/>
<dbReference type="OrthoDB" id="8300170at2759"/>
<dbReference type="BioCyc" id="YEAST:G3O-32949-MONOMER"/>
<dbReference type="Reactome" id="R-SCE-6798695">
    <property type="pathway name" value="Neutrophil degranulation"/>
</dbReference>
<dbReference type="Reactome" id="R-SCE-70171">
    <property type="pathway name" value="Glycolysis"/>
</dbReference>
<dbReference type="Reactome" id="R-SCE-71336">
    <property type="pathway name" value="Pentose phosphate pathway"/>
</dbReference>
<dbReference type="SABIO-RK" id="Q03262"/>
<dbReference type="BioGRID-ORCS" id="855321">
    <property type="hits" value="1 hit in 10 CRISPR screens"/>
</dbReference>
<dbReference type="PRO" id="PR:Q03262"/>
<dbReference type="Proteomes" id="UP000002311">
    <property type="component" value="Chromosome XIII"/>
</dbReference>
<dbReference type="RNAct" id="Q03262">
    <property type="molecule type" value="protein"/>
</dbReference>
<dbReference type="GO" id="GO:0005737">
    <property type="term" value="C:cytoplasm"/>
    <property type="evidence" value="ECO:0007005"/>
    <property type="project" value="SGD"/>
</dbReference>
<dbReference type="GO" id="GO:0005634">
    <property type="term" value="C:nucleus"/>
    <property type="evidence" value="ECO:0007005"/>
    <property type="project" value="SGD"/>
</dbReference>
<dbReference type="GO" id="GO:0000287">
    <property type="term" value="F:magnesium ion binding"/>
    <property type="evidence" value="ECO:0007669"/>
    <property type="project" value="InterPro"/>
</dbReference>
<dbReference type="GO" id="GO:0008973">
    <property type="term" value="F:phosphopentomutase activity"/>
    <property type="evidence" value="ECO:0000314"/>
    <property type="project" value="SGD"/>
</dbReference>
<dbReference type="GO" id="GO:0006006">
    <property type="term" value="P:glucose metabolic process"/>
    <property type="evidence" value="ECO:0007669"/>
    <property type="project" value="UniProtKB-KW"/>
</dbReference>
<dbReference type="GO" id="GO:0046115">
    <property type="term" value="P:guanosine catabolic process"/>
    <property type="evidence" value="ECO:0000315"/>
    <property type="project" value="SGD"/>
</dbReference>
<dbReference type="GO" id="GO:0006148">
    <property type="term" value="P:inosine catabolic process"/>
    <property type="evidence" value="ECO:0000315"/>
    <property type="project" value="SGD"/>
</dbReference>
<dbReference type="GO" id="GO:0006166">
    <property type="term" value="P:purine ribonucleoside salvage"/>
    <property type="evidence" value="ECO:0000315"/>
    <property type="project" value="SGD"/>
</dbReference>
<dbReference type="CDD" id="cd05799">
    <property type="entry name" value="PGM2"/>
    <property type="match status" value="1"/>
</dbReference>
<dbReference type="FunFam" id="3.40.120.10:FF:000035">
    <property type="entry name" value="Pgm3p"/>
    <property type="match status" value="1"/>
</dbReference>
<dbReference type="FunFam" id="3.40.120.10:FF:000037">
    <property type="entry name" value="Pgm3p"/>
    <property type="match status" value="1"/>
</dbReference>
<dbReference type="Gene3D" id="3.40.120.10">
    <property type="entry name" value="Alpha-D-Glucose-1,6-Bisphosphate, subunit A, domain 3"/>
    <property type="match status" value="3"/>
</dbReference>
<dbReference type="Gene3D" id="3.30.310.50">
    <property type="entry name" value="Alpha-D-phosphohexomutase, C-terminal domain"/>
    <property type="match status" value="1"/>
</dbReference>
<dbReference type="InterPro" id="IPR005844">
    <property type="entry name" value="A-D-PHexomutase_a/b/a-I"/>
</dbReference>
<dbReference type="InterPro" id="IPR016055">
    <property type="entry name" value="A-D-PHexomutase_a/b/a-I/II/III"/>
</dbReference>
<dbReference type="InterPro" id="IPR005845">
    <property type="entry name" value="A-D-PHexomutase_a/b/a-II"/>
</dbReference>
<dbReference type="InterPro" id="IPR005846">
    <property type="entry name" value="A-D-PHexomutase_a/b/a-III"/>
</dbReference>
<dbReference type="InterPro" id="IPR036900">
    <property type="entry name" value="A-D-PHexomutase_C_sf"/>
</dbReference>
<dbReference type="InterPro" id="IPR016066">
    <property type="entry name" value="A-D-PHexomutase_CS"/>
</dbReference>
<dbReference type="PANTHER" id="PTHR45745:SF1">
    <property type="entry name" value="PHOSPHOGLUCOMUTASE 2B-RELATED"/>
    <property type="match status" value="1"/>
</dbReference>
<dbReference type="PANTHER" id="PTHR45745">
    <property type="entry name" value="PHOSPHOMANNOMUTASE 45A"/>
    <property type="match status" value="1"/>
</dbReference>
<dbReference type="Pfam" id="PF02878">
    <property type="entry name" value="PGM_PMM_I"/>
    <property type="match status" value="1"/>
</dbReference>
<dbReference type="Pfam" id="PF02879">
    <property type="entry name" value="PGM_PMM_II"/>
    <property type="match status" value="1"/>
</dbReference>
<dbReference type="Pfam" id="PF02880">
    <property type="entry name" value="PGM_PMM_III"/>
    <property type="match status" value="1"/>
</dbReference>
<dbReference type="SUPFAM" id="SSF55957">
    <property type="entry name" value="Phosphoglucomutase, C-terminal domain"/>
    <property type="match status" value="1"/>
</dbReference>
<dbReference type="SUPFAM" id="SSF53738">
    <property type="entry name" value="Phosphoglucomutase, first 3 domains"/>
    <property type="match status" value="3"/>
</dbReference>
<dbReference type="PROSITE" id="PS00710">
    <property type="entry name" value="PGM_PMM"/>
    <property type="match status" value="1"/>
</dbReference>
<proteinExistence type="evidence at protein level"/>
<evidence type="ECO:0000250" key="1">
    <source>
        <dbReference type="UniProtKB" id="P00949"/>
    </source>
</evidence>
<evidence type="ECO:0000269" key="2">
    <source>
    </source>
</evidence>
<evidence type="ECO:0000269" key="3">
    <source>
    </source>
</evidence>
<evidence type="ECO:0000269" key="4">
    <source>
    </source>
</evidence>
<evidence type="ECO:0000269" key="5">
    <source>
    </source>
</evidence>
<evidence type="ECO:0000269" key="6">
    <source>
    </source>
</evidence>
<evidence type="ECO:0000303" key="7">
    <source>
    </source>
</evidence>
<evidence type="ECO:0000303" key="8">
    <source>
    </source>
</evidence>
<evidence type="ECO:0000303" key="9">
    <source>
    </source>
</evidence>
<evidence type="ECO:0000305" key="10"/>
<evidence type="ECO:0000312" key="11">
    <source>
        <dbReference type="SGD" id="S000004891"/>
    </source>
</evidence>
<evidence type="ECO:0007744" key="12">
    <source>
    </source>
</evidence>
<name>PGM3_YEAST</name>
<protein>
    <recommendedName>
        <fullName evidence="8">Phosphoribomutase</fullName>
        <shortName>PRM</shortName>
        <ecNumber evidence="5">5.4.2.7</ecNumber>
    </recommendedName>
    <alternativeName>
        <fullName evidence="7">Phosphoglucomutase 3</fullName>
        <shortName>PGM 3</shortName>
    </alternativeName>
</protein>
<sequence>MLQGILETVPSDLKDPISLWFKQDRNPKTIEEVTALCKKSDWNELHKRFDSRIQFGTAGLRSQMQAGFSRMNTLVVIQASQGLATYVRQQFPDNLVAVVGHDHRFHSKEFARATAAAFLLKGFKVHYLNPDHEFVHTPLVPFAVDKLKASVGVMITASHNPKMDNGYKVYYSNGCQIIPPHDHAISDSIDANLEPWANVWDFDDVLNKALKQGKLMYSREEMLKLYLEEVSKNLVEINPLKLEVKAKPWFVYTPMHGVGFDIFSTIVKKTLCLVEGKDYLCVPEQQNPDPSFPTVGFPNPEEKGALDIGINLAEKHDIDLLVANDPDADRFSVAVKDMQSGEWRQLTGNEIGFLFAFYEYQKYKSMDKEFQHVHPLAMLNSTVSSQMIKKMAEIEGFHYEDTLTGFKWIGNRAILLEKKGYYVPFGFEEAIGYMFPAMEHDKDGISASIVFLQAYCKWKIDHNLDPLNVLENGFKKYGVFKEYNGYYVVPNPTVTKDIFDYIRNVYTPEGASYPSSIGEEIEVLYYRDLTTGYQSDTINHKPTLPVDPTSQMITVSARPSNGSENEHIRFTIRGSGTEPKLKVYIEACANEEQRASFLAKLTWNVLRREWFRPDEMNIVTKF</sequence>
<reference key="1">
    <citation type="journal article" date="1997" name="Nature">
        <title>The nucleotide sequence of Saccharomyces cerevisiae chromosome XIII.</title>
        <authorList>
            <person name="Bowman S."/>
            <person name="Churcher C.M."/>
            <person name="Badcock K."/>
            <person name="Brown D."/>
            <person name="Chillingworth T."/>
            <person name="Connor R."/>
            <person name="Dedman K."/>
            <person name="Devlin K."/>
            <person name="Gentles S."/>
            <person name="Hamlin N."/>
            <person name="Hunt S."/>
            <person name="Jagels K."/>
            <person name="Lye G."/>
            <person name="Moule S."/>
            <person name="Odell C."/>
            <person name="Pearson D."/>
            <person name="Rajandream M.A."/>
            <person name="Rice P."/>
            <person name="Skelton J."/>
            <person name="Walsh S.V."/>
            <person name="Whitehead S."/>
            <person name="Barrell B.G."/>
        </authorList>
    </citation>
    <scope>NUCLEOTIDE SEQUENCE [LARGE SCALE GENOMIC DNA]</scope>
    <source>
        <strain>ATCC 204508 / S288c</strain>
    </source>
</reference>
<reference key="2">
    <citation type="journal article" date="2014" name="G3 (Bethesda)">
        <title>The reference genome sequence of Saccharomyces cerevisiae: Then and now.</title>
        <authorList>
            <person name="Engel S.R."/>
            <person name="Dietrich F.S."/>
            <person name="Fisk D.G."/>
            <person name="Binkley G."/>
            <person name="Balakrishnan R."/>
            <person name="Costanzo M.C."/>
            <person name="Dwight S.S."/>
            <person name="Hitz B.C."/>
            <person name="Karra K."/>
            <person name="Nash R.S."/>
            <person name="Weng S."/>
            <person name="Wong E.D."/>
            <person name="Lloyd P."/>
            <person name="Skrzypek M.S."/>
            <person name="Miyasato S.R."/>
            <person name="Simison M."/>
            <person name="Cherry J.M."/>
        </authorList>
    </citation>
    <scope>GENOME REANNOTATION</scope>
    <source>
        <strain>ATCC 204508 / S288c</strain>
    </source>
</reference>
<reference key="3">
    <citation type="journal article" date="2003" name="Nature">
        <title>Global analysis of protein localization in budding yeast.</title>
        <authorList>
            <person name="Huh W.-K."/>
            <person name="Falvo J.V."/>
            <person name="Gerke L.C."/>
            <person name="Carroll A.S."/>
            <person name="Howson R.W."/>
            <person name="Weissman J.S."/>
            <person name="O'Shea E.K."/>
        </authorList>
    </citation>
    <scope>SUBCELLULAR LOCATION [LARGE SCALE ANALYSIS]</scope>
</reference>
<reference key="4">
    <citation type="journal article" date="2003" name="Nature">
        <title>Global analysis of protein expression in yeast.</title>
        <authorList>
            <person name="Ghaemmaghami S."/>
            <person name="Huh W.-K."/>
            <person name="Bower K."/>
            <person name="Howson R.W."/>
            <person name="Belle A."/>
            <person name="Dephoure N."/>
            <person name="O'Shea E.K."/>
            <person name="Weissman J.S."/>
        </authorList>
    </citation>
    <scope>LEVEL OF PROTEIN EXPRESSION [LARGE SCALE ANALYSIS]</scope>
</reference>
<reference key="5">
    <citation type="journal article" date="2005" name="Mol. Cell. Proteomics">
        <title>Quantitative phosphoproteomics applied to the yeast pheromone signaling pathway.</title>
        <authorList>
            <person name="Gruhler A."/>
            <person name="Olsen J.V."/>
            <person name="Mohammed S."/>
            <person name="Mortensen P."/>
            <person name="Faergeman N.J."/>
            <person name="Mann M."/>
            <person name="Jensen O.N."/>
        </authorList>
    </citation>
    <scope>PHOSPHORYLATION [LARGE SCALE ANALYSIS] AT SER-158</scope>
    <scope>IDENTIFICATION BY MASS SPECTROMETRY [LARGE SCALE ANALYSIS]</scope>
    <source>
        <strain>YAL6B</strain>
    </source>
</reference>
<reference key="6">
    <citation type="journal article" date="2007" name="J. Proteome Res.">
        <title>Large-scale phosphorylation analysis of alpha-factor-arrested Saccharomyces cerevisiae.</title>
        <authorList>
            <person name="Li X."/>
            <person name="Gerber S.A."/>
            <person name="Rudner A.D."/>
            <person name="Beausoleil S.A."/>
            <person name="Haas W."/>
            <person name="Villen J."/>
            <person name="Elias J.E."/>
            <person name="Gygi S.P."/>
        </authorList>
    </citation>
    <scope>IDENTIFICATION BY MASS SPECTROMETRY [LARGE SCALE ANALYSIS]</scope>
    <source>
        <strain>ADR376</strain>
    </source>
</reference>
<reference key="7">
    <citation type="journal article" date="2008" name="Biochem. Biophys. Res. Commun.">
        <title>Molecular characterization reveals that YMR278w encoded protein is environmental stress response homologue of Saccharomyces cerevisiae PGM2.</title>
        <authorList>
            <person name="Tiwari A."/>
            <person name="Bhat J.P."/>
        </authorList>
    </citation>
    <scope>FUNCTION</scope>
    <scope>BIOPHYSICOCHEMICAL PROPERTIES</scope>
    <scope>MUTAGENESIS OF SER-158 AND PRO-326</scope>
</reference>
<reference key="8">
    <citation type="journal article" date="2008" name="Mol. Cell. Proteomics">
        <title>A multidimensional chromatography technology for in-depth phosphoproteome analysis.</title>
        <authorList>
            <person name="Albuquerque C.P."/>
            <person name="Smolka M.B."/>
            <person name="Payne S.H."/>
            <person name="Bafna V."/>
            <person name="Eng J."/>
            <person name="Zhou H."/>
        </authorList>
    </citation>
    <scope>IDENTIFICATION BY MASS SPECTROMETRY [LARGE SCALE ANALYSIS]</scope>
</reference>
<reference key="9">
    <citation type="journal article" date="2009" name="Science">
        <title>Global analysis of Cdk1 substrate phosphorylation sites provides insights into evolution.</title>
        <authorList>
            <person name="Holt L.J."/>
            <person name="Tuch B.B."/>
            <person name="Villen J."/>
            <person name="Johnson A.D."/>
            <person name="Gygi S.P."/>
            <person name="Morgan D.O."/>
        </authorList>
    </citation>
    <scope>IDENTIFICATION BY MASS SPECTROMETRY [LARGE SCALE ANALYSIS]</scope>
</reference>
<reference key="10">
    <citation type="journal article" date="2012" name="FEBS Lett.">
        <title>The PGM3 gene encodes the major phosphoribomutase in the yeast Saccharomyces cerevisiae.</title>
        <authorList>
            <person name="Walther T."/>
            <person name="Baylac A."/>
            <person name="Alkim C."/>
            <person name="Vax A."/>
            <person name="Cordier H."/>
            <person name="Francois J.M."/>
        </authorList>
    </citation>
    <scope>FUNCTION</scope>
    <scope>CATALYTIC ACTIVITY</scope>
    <scope>BIOPHYSICOCHEMICAL PROPERTIES</scope>
    <scope>DISRUPTION PHENOTYPE</scope>
</reference>
<reference key="11">
    <citation type="journal article" date="2013" name="Mol. Syst. Biol.">
        <title>Nucleotide degradation and ribose salvage in yeast.</title>
        <authorList>
            <person name="Xu Y.F."/>
            <person name="Letisse F."/>
            <person name="Absalan F."/>
            <person name="Lu W."/>
            <person name="Kuznetsova E."/>
            <person name="Brown G."/>
            <person name="Caudy A.A."/>
            <person name="Yakunin A.F."/>
            <person name="Broach J.R."/>
            <person name="Rabinowitz J.D."/>
        </authorList>
    </citation>
    <scope>FUNCTION</scope>
    <scope>DISRUPTION PHENOTYPE</scope>
</reference>
<accession>Q03262</accession>
<accession>D6W0A5</accession>
<feature type="chain" id="PRO_0000148022" description="Phosphoribomutase">
    <location>
        <begin position="1"/>
        <end position="622"/>
    </location>
</feature>
<feature type="active site" description="Phosphoserine intermediate" evidence="1">
    <location>
        <position position="158"/>
    </location>
</feature>
<feature type="binding site" evidence="1">
    <location>
        <position position="57"/>
    </location>
    <ligand>
        <name>substrate</name>
    </ligand>
</feature>
<feature type="binding site" evidence="1">
    <location>
        <position position="61"/>
    </location>
    <ligand>
        <name>substrate</name>
    </ligand>
</feature>
<feature type="binding site" evidence="1">
    <location>
        <begin position="158"/>
        <end position="159"/>
    </location>
    <ligand>
        <name>substrate</name>
    </ligand>
</feature>
<feature type="binding site" description="via phosphate group" evidence="1">
    <location>
        <position position="158"/>
    </location>
    <ligand>
        <name>Mg(2+)</name>
        <dbReference type="ChEBI" id="CHEBI:18420"/>
    </ligand>
</feature>
<feature type="binding site" evidence="1">
    <location>
        <position position="168"/>
    </location>
    <ligand>
        <name>substrate</name>
    </ligand>
</feature>
<feature type="binding site" evidence="1">
    <location>
        <position position="325"/>
    </location>
    <ligand>
        <name>Mg(2+)</name>
        <dbReference type="ChEBI" id="CHEBI:18420"/>
    </ligand>
</feature>
<feature type="binding site" evidence="1">
    <location>
        <position position="327"/>
    </location>
    <ligand>
        <name>Mg(2+)</name>
        <dbReference type="ChEBI" id="CHEBI:18420"/>
    </ligand>
</feature>
<feature type="binding site" evidence="1">
    <location>
        <begin position="329"/>
        <end position="330"/>
    </location>
    <ligand>
        <name>substrate</name>
    </ligand>
</feature>
<feature type="binding site" evidence="1">
    <location>
        <position position="329"/>
    </location>
    <ligand>
        <name>Mg(2+)</name>
        <dbReference type="ChEBI" id="CHEBI:18420"/>
    </ligand>
</feature>
<feature type="binding site" evidence="1">
    <location>
        <position position="404"/>
    </location>
    <ligand>
        <name>substrate</name>
    </ligand>
</feature>
<feature type="binding site" evidence="1">
    <location>
        <begin position="428"/>
        <end position="430"/>
    </location>
    <ligand>
        <name>substrate</name>
    </ligand>
</feature>
<feature type="binding site" evidence="1">
    <location>
        <position position="442"/>
    </location>
    <ligand>
        <name>substrate</name>
    </ligand>
</feature>
<feature type="modified residue" description="Phosphoserine" evidence="12">
    <location>
        <position position="158"/>
    </location>
</feature>
<feature type="mutagenesis site" description="Loss of function." evidence="4">
    <original>S</original>
    <variation>T</variation>
    <location>
        <position position="158"/>
    </location>
</feature>
<feature type="mutagenesis site" description="No effect." evidence="4">
    <original>P</original>
    <variation>G</variation>
    <location>
        <position position="326"/>
    </location>
</feature>
<organism>
    <name type="scientific">Saccharomyces cerevisiae (strain ATCC 204508 / S288c)</name>
    <name type="common">Baker's yeast</name>
    <dbReference type="NCBI Taxonomy" id="559292"/>
    <lineage>
        <taxon>Eukaryota</taxon>
        <taxon>Fungi</taxon>
        <taxon>Dikarya</taxon>
        <taxon>Ascomycota</taxon>
        <taxon>Saccharomycotina</taxon>
        <taxon>Saccharomycetes</taxon>
        <taxon>Saccharomycetales</taxon>
        <taxon>Saccharomycetaceae</taxon>
        <taxon>Saccharomyces</taxon>
    </lineage>
</organism>
<keyword id="KW-0119">Carbohydrate metabolism</keyword>
<keyword id="KW-0963">Cytoplasm</keyword>
<keyword id="KW-0313">Glucose metabolism</keyword>
<keyword id="KW-0413">Isomerase</keyword>
<keyword id="KW-0460">Magnesium</keyword>
<keyword id="KW-0479">Metal-binding</keyword>
<keyword id="KW-0539">Nucleus</keyword>
<keyword id="KW-0597">Phosphoprotein</keyword>
<keyword id="KW-1185">Reference proteome</keyword>
<gene>
    <name evidence="9" type="primary">PRM15</name>
    <name evidence="7" type="synonym">PGM3</name>
    <name evidence="11" type="ordered locus">YMR278W</name>
    <name type="ORF">YM8021.04</name>
</gene>
<comment type="function">
    <text evidence="4">Major phosphoribomutase that converts ribose 1-phosphate to ribose 5-phosphate. Involved in ribose salvage via the pentose phosphate pathway.</text>
</comment>
<comment type="catalytic activity">
    <reaction evidence="5">
        <text>alpha-D-ribose 1-phosphate = D-ribose 5-phosphate</text>
        <dbReference type="Rhea" id="RHEA:18793"/>
        <dbReference type="ChEBI" id="CHEBI:57720"/>
        <dbReference type="ChEBI" id="CHEBI:78346"/>
        <dbReference type="EC" id="5.4.2.7"/>
    </reaction>
</comment>
<comment type="cofactor">
    <cofactor evidence="1">
        <name>Mg(2+)</name>
        <dbReference type="ChEBI" id="CHEBI:18420"/>
    </cofactor>
    <text evidence="1">Binds 1 Mg(2+) ion per subunit.</text>
</comment>
<comment type="biophysicochemical properties">
    <kinetics>
        <KM evidence="4">2 mM for D-glucose 1-phosphate</KM>
        <KM evidence="5">112 uM for D-glucose 1-phosphate</KM>
        <KM evidence="5">750 uM for D-ribose 1-phosphate</KM>
        <Vmax evidence="5">0.11 umol/min/mg enzyme for D-glucose 1-phosphate</Vmax>
        <Vmax evidence="5">0.29 umol/min/mg enzyme for D-ribose 1-phosphate</Vmax>
    </kinetics>
</comment>
<comment type="subcellular location">
    <subcellularLocation>
        <location evidence="2">Cytoplasm</location>
    </subcellularLocation>
    <subcellularLocation>
        <location evidence="2">Nucleus</location>
    </subcellularLocation>
</comment>
<comment type="disruption phenotype">
    <text evidence="5 6">Hyperaccumulates ribose 1-phosphate and upstream purines upon glucose-induced purine nucleoside recycling.</text>
</comment>
<comment type="miscellaneous">
    <text evidence="3">Present with 4960 molecules/cell in log phase SD medium.</text>
</comment>
<comment type="similarity">
    <text evidence="10">Belongs to the phosphohexose mutase family.</text>
</comment>